<protein>
    <recommendedName>
        <fullName evidence="1">Histidinol-phosphate aminotransferase</fullName>
        <ecNumber evidence="1">2.6.1.9</ecNumber>
    </recommendedName>
    <alternativeName>
        <fullName evidence="1">Imidazole acetol-phosphate transaminase</fullName>
    </alternativeName>
</protein>
<evidence type="ECO:0000255" key="1">
    <source>
        <dbReference type="HAMAP-Rule" id="MF_01023"/>
    </source>
</evidence>
<keyword id="KW-0028">Amino-acid biosynthesis</keyword>
<keyword id="KW-0032">Aminotransferase</keyword>
<keyword id="KW-0368">Histidine biosynthesis</keyword>
<keyword id="KW-0663">Pyridoxal phosphate</keyword>
<keyword id="KW-0808">Transferase</keyword>
<name>HIS8_SALPK</name>
<accession>B5BFB9</accession>
<organism>
    <name type="scientific">Salmonella paratyphi A (strain AKU_12601)</name>
    <dbReference type="NCBI Taxonomy" id="554290"/>
    <lineage>
        <taxon>Bacteria</taxon>
        <taxon>Pseudomonadati</taxon>
        <taxon>Pseudomonadota</taxon>
        <taxon>Gammaproteobacteria</taxon>
        <taxon>Enterobacterales</taxon>
        <taxon>Enterobacteriaceae</taxon>
        <taxon>Salmonella</taxon>
    </lineage>
</organism>
<feature type="chain" id="PRO_1000135422" description="Histidinol-phosphate aminotransferase">
    <location>
        <begin position="1"/>
        <end position="359"/>
    </location>
</feature>
<feature type="modified residue" description="N6-(pyridoxal phosphate)lysine" evidence="1">
    <location>
        <position position="217"/>
    </location>
</feature>
<proteinExistence type="inferred from homology"/>
<comment type="catalytic activity">
    <reaction evidence="1">
        <text>L-histidinol phosphate + 2-oxoglutarate = 3-(imidazol-4-yl)-2-oxopropyl phosphate + L-glutamate</text>
        <dbReference type="Rhea" id="RHEA:23744"/>
        <dbReference type="ChEBI" id="CHEBI:16810"/>
        <dbReference type="ChEBI" id="CHEBI:29985"/>
        <dbReference type="ChEBI" id="CHEBI:57766"/>
        <dbReference type="ChEBI" id="CHEBI:57980"/>
        <dbReference type="EC" id="2.6.1.9"/>
    </reaction>
</comment>
<comment type="cofactor">
    <cofactor evidence="1">
        <name>pyridoxal 5'-phosphate</name>
        <dbReference type="ChEBI" id="CHEBI:597326"/>
    </cofactor>
</comment>
<comment type="pathway">
    <text evidence="1">Amino-acid biosynthesis; L-histidine biosynthesis; L-histidine from 5-phospho-alpha-D-ribose 1-diphosphate: step 7/9.</text>
</comment>
<comment type="subunit">
    <text evidence="1">Homodimer.</text>
</comment>
<comment type="similarity">
    <text evidence="1">Belongs to the class-II pyridoxal-phosphate-dependent aminotransferase family. Histidinol-phosphate aminotransferase subfamily.</text>
</comment>
<reference key="1">
    <citation type="journal article" date="2009" name="BMC Genomics">
        <title>Pseudogene accumulation in the evolutionary histories of Salmonella enterica serovars Paratyphi A and Typhi.</title>
        <authorList>
            <person name="Holt K.E."/>
            <person name="Thomson N.R."/>
            <person name="Wain J."/>
            <person name="Langridge G.C."/>
            <person name="Hasan R."/>
            <person name="Bhutta Z.A."/>
            <person name="Quail M.A."/>
            <person name="Norbertczak H."/>
            <person name="Walker D."/>
            <person name="Simmonds M."/>
            <person name="White B."/>
            <person name="Bason N."/>
            <person name="Mungall K."/>
            <person name="Dougan G."/>
            <person name="Parkhill J."/>
        </authorList>
    </citation>
    <scope>NUCLEOTIDE SEQUENCE [LARGE SCALE GENOMIC DNA]</scope>
    <source>
        <strain>AKU_12601</strain>
    </source>
</reference>
<dbReference type="EC" id="2.6.1.9" evidence="1"/>
<dbReference type="EMBL" id="FM200053">
    <property type="protein sequence ID" value="CAR58884.1"/>
    <property type="molecule type" value="Genomic_DNA"/>
</dbReference>
<dbReference type="RefSeq" id="WP_000102699.1">
    <property type="nucleotide sequence ID" value="NC_011147.1"/>
</dbReference>
<dbReference type="SMR" id="B5BFB9"/>
<dbReference type="KEGG" id="sek:SSPA0748"/>
<dbReference type="HOGENOM" id="CLU_017584_3_1_6"/>
<dbReference type="UniPathway" id="UPA00031">
    <property type="reaction ID" value="UER00012"/>
</dbReference>
<dbReference type="Proteomes" id="UP000001869">
    <property type="component" value="Chromosome"/>
</dbReference>
<dbReference type="GO" id="GO:0004400">
    <property type="term" value="F:histidinol-phosphate transaminase activity"/>
    <property type="evidence" value="ECO:0007669"/>
    <property type="project" value="UniProtKB-UniRule"/>
</dbReference>
<dbReference type="GO" id="GO:0030170">
    <property type="term" value="F:pyridoxal phosphate binding"/>
    <property type="evidence" value="ECO:0007669"/>
    <property type="project" value="InterPro"/>
</dbReference>
<dbReference type="GO" id="GO:0000105">
    <property type="term" value="P:L-histidine biosynthetic process"/>
    <property type="evidence" value="ECO:0007669"/>
    <property type="project" value="UniProtKB-UniRule"/>
</dbReference>
<dbReference type="CDD" id="cd00609">
    <property type="entry name" value="AAT_like"/>
    <property type="match status" value="1"/>
</dbReference>
<dbReference type="FunFam" id="3.40.640.10:FF:000032">
    <property type="entry name" value="Histidinol-phosphate aminotransferase"/>
    <property type="match status" value="1"/>
</dbReference>
<dbReference type="Gene3D" id="3.90.1150.10">
    <property type="entry name" value="Aspartate Aminotransferase, domain 1"/>
    <property type="match status" value="1"/>
</dbReference>
<dbReference type="Gene3D" id="3.40.640.10">
    <property type="entry name" value="Type I PLP-dependent aspartate aminotransferase-like (Major domain)"/>
    <property type="match status" value="1"/>
</dbReference>
<dbReference type="HAMAP" id="MF_01023">
    <property type="entry name" value="HisC_aminotrans_2"/>
    <property type="match status" value="1"/>
</dbReference>
<dbReference type="InterPro" id="IPR001917">
    <property type="entry name" value="Aminotrans_II_pyridoxalP_BS"/>
</dbReference>
<dbReference type="InterPro" id="IPR004839">
    <property type="entry name" value="Aminotransferase_I/II_large"/>
</dbReference>
<dbReference type="InterPro" id="IPR005861">
    <property type="entry name" value="HisP_aminotrans"/>
</dbReference>
<dbReference type="InterPro" id="IPR015424">
    <property type="entry name" value="PyrdxlP-dep_Trfase"/>
</dbReference>
<dbReference type="InterPro" id="IPR015421">
    <property type="entry name" value="PyrdxlP-dep_Trfase_major"/>
</dbReference>
<dbReference type="InterPro" id="IPR015422">
    <property type="entry name" value="PyrdxlP-dep_Trfase_small"/>
</dbReference>
<dbReference type="NCBIfam" id="TIGR01141">
    <property type="entry name" value="hisC"/>
    <property type="match status" value="1"/>
</dbReference>
<dbReference type="PANTHER" id="PTHR42885:SF2">
    <property type="entry name" value="HISTIDINOL-PHOSPHATE AMINOTRANSFERASE"/>
    <property type="match status" value="1"/>
</dbReference>
<dbReference type="PANTHER" id="PTHR42885">
    <property type="entry name" value="HISTIDINOL-PHOSPHATE AMINOTRANSFERASE-RELATED"/>
    <property type="match status" value="1"/>
</dbReference>
<dbReference type="Pfam" id="PF00155">
    <property type="entry name" value="Aminotran_1_2"/>
    <property type="match status" value="1"/>
</dbReference>
<dbReference type="SUPFAM" id="SSF53383">
    <property type="entry name" value="PLP-dependent transferases"/>
    <property type="match status" value="1"/>
</dbReference>
<dbReference type="PROSITE" id="PS00599">
    <property type="entry name" value="AA_TRANSFER_CLASS_2"/>
    <property type="match status" value="1"/>
</dbReference>
<sequence>MSTENTLSVADLARENIRNLVPYQSARRLGGNGDVWLNANEFPTAVEFQLTQQTLNRYPECQPKAVIENYAQYAGVKPEQVLVSRGADEGIELVIRAFCEPGKDAILYCPPTYGMYSVSAETIGVERRTVPALENWQLDLQGISDNLDGTKVAFVCSPNNPTGQLINPQDLRTLLELTRGKAIVVADEAYIEFCPQATLTGWLVEYPHLVILRTLSKAFALAGLRCGFTLANEEVINLLLKVIAPYPLSTPVADIAAQALSPQGINAMRDRVAQTVQERQYLVNALQQTACVEHVFDSETNYILARFTASSSVFKSLWDQGIILRDQNKQPSLSGCLRITVGTRQENQRVIDALRAEPV</sequence>
<gene>
    <name evidence="1" type="primary">hisC</name>
    <name type="ordered locus">SSPA0748</name>
</gene>